<reference key="1">
    <citation type="journal article" date="2000" name="Blood">
        <title>Costimulation of T cells by B7-H2, a B7-like molecule that binds ICOS.</title>
        <authorList>
            <person name="Wang S."/>
            <person name="Zhu G."/>
            <person name="Chapoval A.I."/>
            <person name="Dong H."/>
            <person name="Tamada K."/>
            <person name="Ni J."/>
            <person name="Chen L."/>
        </authorList>
    </citation>
    <scope>NUCLEOTIDE SEQUENCE [MRNA] (ISOFORM 1)</scope>
    <scope>FUNCTION</scope>
    <scope>TISSUE SPECIFICITY</scope>
    <source>
        <tissue>Dendritic cell</tissue>
    </source>
</reference>
<reference key="2">
    <citation type="journal article" date="2000" name="Int. Immunol.">
        <title>Characterization of a new human B7-related protein: B7RP-1 is the ligand to the co-stimulatory protein ICOS.</title>
        <authorList>
            <person name="Yoshinaga S.K."/>
            <person name="Zhang M."/>
            <person name="Pistillo J."/>
            <person name="Horan T."/>
            <person name="Khare S.D."/>
            <person name="Miner K."/>
            <person name="Sonnenberg M."/>
            <person name="Boone T."/>
            <person name="Brankow D."/>
            <person name="Dai T."/>
            <person name="Delaney J."/>
            <person name="Han H."/>
            <person name="Hui A."/>
            <person name="Kohno T."/>
            <person name="Manoukian R."/>
            <person name="Whoriskey J.S."/>
            <person name="Coccia M.A."/>
        </authorList>
    </citation>
    <scope>NUCLEOTIDE SEQUENCE [MRNA] (ISOFORM 1)</scope>
    <scope>FUNCTION</scope>
    <scope>SUBCELLULAR LOCATION</scope>
    <scope>INDUCTION BY TNF</scope>
    <scope>TISSUE SPECIFICITY</scope>
    <source>
        <tissue>Peripheral blood lymphocyte</tissue>
    </source>
</reference>
<reference key="3">
    <citation type="journal article" date="2000" name="J. Immunol.">
        <title>Identification of GL50, a novel B7-like protein that functionally binds to ICOS receptor.</title>
        <authorList>
            <person name="Ling V."/>
            <person name="Wu P.W."/>
            <person name="Finnerty H.F."/>
            <person name="Bean K.M."/>
            <person name="Spaulding V."/>
            <person name="Fouser L.A."/>
            <person name="Leonard J.P."/>
            <person name="Hunter S.E."/>
            <person name="Zollner R."/>
            <person name="Thomas J.L."/>
            <person name="Miyashiro J.S."/>
            <person name="Jacobs K.A."/>
            <person name="Collins M."/>
        </authorList>
    </citation>
    <scope>NUCLEOTIDE SEQUENCE [MRNA] (ISOFORM 2)</scope>
    <source>
        <tissue>Leukocyte</tissue>
    </source>
</reference>
<reference key="4">
    <citation type="patent" date="2001-03-29" number="WO0121796">
        <title>GL50 molecules and uses therefor.</title>
        <authorList>
            <person name="Ling V."/>
            <person name="Dunussi-Joannopolulos K."/>
        </authorList>
    </citation>
    <scope>NUCLEOTIDE SEQUENCE [MRNA] (ISOFORM 2)</scope>
</reference>
<reference key="5">
    <citation type="journal article" date="1998" name="DNA Res.">
        <title>Prediction of the coding sequences of unidentified human genes. X. The complete sequences of 100 new cDNA clones from brain which can code for large proteins in vitro.</title>
        <authorList>
            <person name="Ishikawa K."/>
            <person name="Nagase T."/>
            <person name="Suyama M."/>
            <person name="Miyajima N."/>
            <person name="Tanaka A."/>
            <person name="Kotani H."/>
            <person name="Nomura N."/>
            <person name="Ohara O."/>
        </authorList>
    </citation>
    <scope>NUCLEOTIDE SEQUENCE [LARGE SCALE MRNA]</scope>
    <source>
        <tissue>Brain</tissue>
    </source>
</reference>
<reference key="6">
    <citation type="journal article" date="2004" name="Nat. Genet.">
        <title>Complete sequencing and characterization of 21,243 full-length human cDNAs.</title>
        <authorList>
            <person name="Ota T."/>
            <person name="Suzuki Y."/>
            <person name="Nishikawa T."/>
            <person name="Otsuki T."/>
            <person name="Sugiyama T."/>
            <person name="Irie R."/>
            <person name="Wakamatsu A."/>
            <person name="Hayashi K."/>
            <person name="Sato H."/>
            <person name="Nagai K."/>
            <person name="Kimura K."/>
            <person name="Makita H."/>
            <person name="Sekine M."/>
            <person name="Obayashi M."/>
            <person name="Nishi T."/>
            <person name="Shibahara T."/>
            <person name="Tanaka T."/>
            <person name="Ishii S."/>
            <person name="Yamamoto J."/>
            <person name="Saito K."/>
            <person name="Kawai Y."/>
            <person name="Isono Y."/>
            <person name="Nakamura Y."/>
            <person name="Nagahari K."/>
            <person name="Murakami K."/>
            <person name="Yasuda T."/>
            <person name="Iwayanagi T."/>
            <person name="Wagatsuma M."/>
            <person name="Shiratori A."/>
            <person name="Sudo H."/>
            <person name="Hosoiri T."/>
            <person name="Kaku Y."/>
            <person name="Kodaira H."/>
            <person name="Kondo H."/>
            <person name="Sugawara M."/>
            <person name="Takahashi M."/>
            <person name="Kanda K."/>
            <person name="Yokoi T."/>
            <person name="Furuya T."/>
            <person name="Kikkawa E."/>
            <person name="Omura Y."/>
            <person name="Abe K."/>
            <person name="Kamihara K."/>
            <person name="Katsuta N."/>
            <person name="Sato K."/>
            <person name="Tanikawa M."/>
            <person name="Yamazaki M."/>
            <person name="Ninomiya K."/>
            <person name="Ishibashi T."/>
            <person name="Yamashita H."/>
            <person name="Murakawa K."/>
            <person name="Fujimori K."/>
            <person name="Tanai H."/>
            <person name="Kimata M."/>
            <person name="Watanabe M."/>
            <person name="Hiraoka S."/>
            <person name="Chiba Y."/>
            <person name="Ishida S."/>
            <person name="Ono Y."/>
            <person name="Takiguchi S."/>
            <person name="Watanabe S."/>
            <person name="Yosida M."/>
            <person name="Hotuta T."/>
            <person name="Kusano J."/>
            <person name="Kanehori K."/>
            <person name="Takahashi-Fujii A."/>
            <person name="Hara H."/>
            <person name="Tanase T.-O."/>
            <person name="Nomura Y."/>
            <person name="Togiya S."/>
            <person name="Komai F."/>
            <person name="Hara R."/>
            <person name="Takeuchi K."/>
            <person name="Arita M."/>
            <person name="Imose N."/>
            <person name="Musashino K."/>
            <person name="Yuuki H."/>
            <person name="Oshima A."/>
            <person name="Sasaki N."/>
            <person name="Aotsuka S."/>
            <person name="Yoshikawa Y."/>
            <person name="Matsunawa H."/>
            <person name="Ichihara T."/>
            <person name="Shiohata N."/>
            <person name="Sano S."/>
            <person name="Moriya S."/>
            <person name="Momiyama H."/>
            <person name="Satoh N."/>
            <person name="Takami S."/>
            <person name="Terashima Y."/>
            <person name="Suzuki O."/>
            <person name="Nakagawa S."/>
            <person name="Senoh A."/>
            <person name="Mizoguchi H."/>
            <person name="Goto Y."/>
            <person name="Shimizu F."/>
            <person name="Wakebe H."/>
            <person name="Hishigaki H."/>
            <person name="Watanabe T."/>
            <person name="Sugiyama A."/>
            <person name="Takemoto M."/>
            <person name="Kawakami B."/>
            <person name="Yamazaki M."/>
            <person name="Watanabe K."/>
            <person name="Kumagai A."/>
            <person name="Itakura S."/>
            <person name="Fukuzumi Y."/>
            <person name="Fujimori Y."/>
            <person name="Komiyama M."/>
            <person name="Tashiro H."/>
            <person name="Tanigami A."/>
            <person name="Fujiwara T."/>
            <person name="Ono T."/>
            <person name="Yamada K."/>
            <person name="Fujii Y."/>
            <person name="Ozaki K."/>
            <person name="Hirao M."/>
            <person name="Ohmori Y."/>
            <person name="Kawabata A."/>
            <person name="Hikiji T."/>
            <person name="Kobatake N."/>
            <person name="Inagaki H."/>
            <person name="Ikema Y."/>
            <person name="Okamoto S."/>
            <person name="Okitani R."/>
            <person name="Kawakami T."/>
            <person name="Noguchi S."/>
            <person name="Itoh T."/>
            <person name="Shigeta K."/>
            <person name="Senba T."/>
            <person name="Matsumura K."/>
            <person name="Nakajima Y."/>
            <person name="Mizuno T."/>
            <person name="Morinaga M."/>
            <person name="Sasaki M."/>
            <person name="Togashi T."/>
            <person name="Oyama M."/>
            <person name="Hata H."/>
            <person name="Watanabe M."/>
            <person name="Komatsu T."/>
            <person name="Mizushima-Sugano J."/>
            <person name="Satoh T."/>
            <person name="Shirai Y."/>
            <person name="Takahashi Y."/>
            <person name="Nakagawa K."/>
            <person name="Okumura K."/>
            <person name="Nagase T."/>
            <person name="Nomura N."/>
            <person name="Kikuchi H."/>
            <person name="Masuho Y."/>
            <person name="Yamashita R."/>
            <person name="Nakai K."/>
            <person name="Yada T."/>
            <person name="Nakamura Y."/>
            <person name="Ohara O."/>
            <person name="Isogai T."/>
            <person name="Sugano S."/>
        </authorList>
    </citation>
    <scope>NUCLEOTIDE SEQUENCE [LARGE SCALE MRNA] (ISOFORM 3)</scope>
</reference>
<reference key="7">
    <citation type="journal article" date="2000" name="Nature">
        <title>The DNA sequence of human chromosome 21.</title>
        <authorList>
            <person name="Hattori M."/>
            <person name="Fujiyama A."/>
            <person name="Taylor T.D."/>
            <person name="Watanabe H."/>
            <person name="Yada T."/>
            <person name="Park H.-S."/>
            <person name="Toyoda A."/>
            <person name="Ishii K."/>
            <person name="Totoki Y."/>
            <person name="Choi D.-K."/>
            <person name="Groner Y."/>
            <person name="Soeda E."/>
            <person name="Ohki M."/>
            <person name="Takagi T."/>
            <person name="Sakaki Y."/>
            <person name="Taudien S."/>
            <person name="Blechschmidt K."/>
            <person name="Polley A."/>
            <person name="Menzel U."/>
            <person name="Delabar J."/>
            <person name="Kumpf K."/>
            <person name="Lehmann R."/>
            <person name="Patterson D."/>
            <person name="Reichwald K."/>
            <person name="Rump A."/>
            <person name="Schillhabel M."/>
            <person name="Schudy A."/>
            <person name="Zimmermann W."/>
            <person name="Rosenthal A."/>
            <person name="Kudoh J."/>
            <person name="Shibuya K."/>
            <person name="Kawasaki K."/>
            <person name="Asakawa S."/>
            <person name="Shintani A."/>
            <person name="Sasaki T."/>
            <person name="Nagamine K."/>
            <person name="Mitsuyama S."/>
            <person name="Antonarakis S.E."/>
            <person name="Minoshima S."/>
            <person name="Shimizu N."/>
            <person name="Nordsiek G."/>
            <person name="Hornischer K."/>
            <person name="Brandt P."/>
            <person name="Scharfe M."/>
            <person name="Schoen O."/>
            <person name="Desario A."/>
            <person name="Reichelt J."/>
            <person name="Kauer G."/>
            <person name="Bloecker H."/>
            <person name="Ramser J."/>
            <person name="Beck A."/>
            <person name="Klages S."/>
            <person name="Hennig S."/>
            <person name="Riesselmann L."/>
            <person name="Dagand E."/>
            <person name="Wehrmeyer S."/>
            <person name="Borzym K."/>
            <person name="Gardiner K."/>
            <person name="Nizetic D."/>
            <person name="Francis F."/>
            <person name="Lehrach H."/>
            <person name="Reinhardt R."/>
            <person name="Yaspo M.-L."/>
        </authorList>
    </citation>
    <scope>NUCLEOTIDE SEQUENCE [LARGE SCALE GENOMIC DNA]</scope>
</reference>
<reference key="8">
    <citation type="submission" date="2005-09" db="EMBL/GenBank/DDBJ databases">
        <authorList>
            <person name="Mural R.J."/>
            <person name="Istrail S."/>
            <person name="Sutton G.G."/>
            <person name="Florea L."/>
            <person name="Halpern A.L."/>
            <person name="Mobarry C.M."/>
            <person name="Lippert R."/>
            <person name="Walenz B."/>
            <person name="Shatkay H."/>
            <person name="Dew I."/>
            <person name="Miller J.R."/>
            <person name="Flanigan M.J."/>
            <person name="Edwards N.J."/>
            <person name="Bolanos R."/>
            <person name="Fasulo D."/>
            <person name="Halldorsson B.V."/>
            <person name="Hannenhalli S."/>
            <person name="Turner R."/>
            <person name="Yooseph S."/>
            <person name="Lu F."/>
            <person name="Nusskern D.R."/>
            <person name="Shue B.C."/>
            <person name="Zheng X.H."/>
            <person name="Zhong F."/>
            <person name="Delcher A.L."/>
            <person name="Huson D.H."/>
            <person name="Kravitz S.A."/>
            <person name="Mouchard L."/>
            <person name="Reinert K."/>
            <person name="Remington K.A."/>
            <person name="Clark A.G."/>
            <person name="Waterman M.S."/>
            <person name="Eichler E.E."/>
            <person name="Adams M.D."/>
            <person name="Hunkapiller M.W."/>
            <person name="Myers E.W."/>
            <person name="Venter J.C."/>
        </authorList>
    </citation>
    <scope>NUCLEOTIDE SEQUENCE [LARGE SCALE GENOMIC DNA]</scope>
</reference>
<reference key="9">
    <citation type="journal article" date="2004" name="Genome Res.">
        <title>The status, quality, and expansion of the NIH full-length cDNA project: the Mammalian Gene Collection (MGC).</title>
        <authorList>
            <consortium name="The MGC Project Team"/>
        </authorList>
    </citation>
    <scope>NUCLEOTIDE SEQUENCE [LARGE SCALE MRNA] (ISOFORM 1)</scope>
    <source>
        <tissue>Colon</tissue>
    </source>
</reference>
<reference key="10">
    <citation type="journal article" date="2000" name="J. Immunol.">
        <title>Characterization of human inducible costimulator ligand expression and function.</title>
        <authorList>
            <person name="Aicher A."/>
            <person name="Hayden-Ledbetter M."/>
            <person name="Brady W.A."/>
            <person name="Pezzutto A."/>
            <person name="Richter G."/>
            <person name="Magaletti D."/>
            <person name="Buckwalter S."/>
            <person name="Ledbetter J.A."/>
            <person name="Clark E.A."/>
        </authorList>
    </citation>
    <scope>TISSUE SPECIFICITY</scope>
    <scope>INDUCTION BY CCL3 AND IFNG</scope>
</reference>
<reference key="11">
    <citation type="journal article" date="2001" name="J. Immunol.">
        <title>Differential expression of inducible costimulator-ligand splice variants: lymphoid regulation of mouse gl50-b and human gl50 molecules.</title>
        <authorList>
            <person name="Ling V."/>
            <person name="Wu P.W."/>
            <person name="Miyashiro J.S."/>
            <person name="Marusic S."/>
            <person name="Finnerty H.F."/>
            <person name="Collins M."/>
        </authorList>
    </citation>
    <scope>SUBCELLULAR LOCATION</scope>
    <scope>TISSUE SPECIFICITY</scope>
</reference>
<reference key="12">
    <citation type="journal article" date="2005" name="J. Proteome Res.">
        <title>Human plasma N-glycoproteome analysis by immunoaffinity subtraction, hydrazide chemistry, and mass spectrometry.</title>
        <authorList>
            <person name="Liu T."/>
            <person name="Qian W.-J."/>
            <person name="Gritsenko M.A."/>
            <person name="Camp D.G. II"/>
            <person name="Monroe M.E."/>
            <person name="Moore R.J."/>
            <person name="Smith R.D."/>
        </authorList>
    </citation>
    <scope>GLYCOSYLATION [LARGE SCALE ANALYSIS] AT ASN-70 AND ASN-186</scope>
    <source>
        <tissue>Plasma</tissue>
    </source>
</reference>
<reference key="13">
    <citation type="journal article" date="2017" name="Proc. Natl. Acad. Sci. U.S.A.">
        <title>Structural basis for cancer immunotherapy by the first-in-class checkpoint inhibitor ipilimumab.</title>
        <authorList>
            <person name="Ramagopal U.A."/>
            <person name="Liu W."/>
            <person name="Garrett-Thomson S.C."/>
            <person name="Bonanno J.B."/>
            <person name="Yan Q."/>
            <person name="Srinivasan M."/>
            <person name="Wong S.C."/>
            <person name="Bell A."/>
            <person name="Mankikar S."/>
            <person name="Rangan V.S."/>
            <person name="Deshpande S."/>
            <person name="Korman A.J."/>
            <person name="Almo S.C."/>
        </authorList>
    </citation>
    <scope>INTERACTION WITH CTLA4</scope>
</reference>
<reference key="14">
    <citation type="journal article" date="2018" name="J. Exp. Med.">
        <title>Loss of human ICOSL results in combined immunodeficiency.</title>
        <authorList>
            <person name="Roussel L."/>
            <person name="Landekic M."/>
            <person name="Golizeh M."/>
            <person name="Gavino C."/>
            <person name="Zhong M.C."/>
            <person name="Chen J."/>
            <person name="Faubert D."/>
            <person name="Blanchet-Cohen A."/>
            <person name="Dansereau L."/>
            <person name="Parent M.A."/>
            <person name="Marin S."/>
            <person name="Luo J."/>
            <person name="Le C."/>
            <person name="Ford B.R."/>
            <person name="Langelier M."/>
            <person name="King I.L."/>
            <person name="Divangahi M."/>
            <person name="Foulkes W.D."/>
            <person name="Veillette A."/>
            <person name="Vinh D.C."/>
        </authorList>
    </citation>
    <scope>INVOLVEMENT IN IMD119</scope>
    <scope>FUNCTION</scope>
    <scope>SUBCELLULAR LOCATION</scope>
    <scope>VARIANT IMD119 LYS-219</scope>
    <scope>CHARACTERIZATION OF VARIANT IMD119 LYS-219</scope>
</reference>
<feature type="signal peptide" evidence="2">
    <location>
        <begin position="1"/>
        <end position="18"/>
    </location>
</feature>
<feature type="chain" id="PRO_0000014803" description="ICOS ligand">
    <location>
        <begin position="19"/>
        <end position="302"/>
    </location>
</feature>
<feature type="topological domain" description="Extracellular" evidence="2">
    <location>
        <begin position="19"/>
        <end position="256"/>
    </location>
</feature>
<feature type="transmembrane region" description="Helical" evidence="2">
    <location>
        <begin position="257"/>
        <end position="277"/>
    </location>
</feature>
<feature type="topological domain" description="Cytoplasmic" evidence="2">
    <location>
        <begin position="278"/>
        <end position="302"/>
    </location>
</feature>
<feature type="domain" description="Ig-like V-type">
    <location>
        <begin position="19"/>
        <end position="129"/>
    </location>
</feature>
<feature type="domain" description="Ig-like C2-type">
    <location>
        <begin position="141"/>
        <end position="227"/>
    </location>
</feature>
<feature type="glycosylation site" description="N-linked (GlcNAc...) asparagine" evidence="8">
    <location>
        <position position="70"/>
    </location>
</feature>
<feature type="glycosylation site" description="N-linked (GlcNAc...) asparagine" evidence="2">
    <location>
        <position position="137"/>
    </location>
</feature>
<feature type="glycosylation site" description="N-linked (GlcNAc...) asparagine" evidence="2">
    <location>
        <position position="173"/>
    </location>
</feature>
<feature type="glycosylation site" description="N-linked (GlcNAc...) asparagine" evidence="8">
    <location>
        <position position="186"/>
    </location>
</feature>
<feature type="glycosylation site" description="N-linked (GlcNAc...) asparagine" evidence="2">
    <location>
        <position position="225"/>
    </location>
</feature>
<feature type="disulfide bond" evidence="3">
    <location>
        <begin position="37"/>
        <end position="113"/>
    </location>
</feature>
<feature type="disulfide bond" evidence="3">
    <location>
        <begin position="158"/>
        <end position="216"/>
    </location>
</feature>
<feature type="splice variant" id="VSP_054718" description="In isoform 3." evidence="15">
    <location>
        <begin position="18"/>
        <end position="134"/>
    </location>
</feature>
<feature type="splice variant" id="VSP_002520" description="In isoform 2." evidence="11 16">
    <original>GHV</original>
    <variation>ESWNLLLLLS</variation>
    <location>
        <begin position="300"/>
        <end position="302"/>
    </location>
</feature>
<feature type="sequence variant" id="VAR_049880" description="In dbSNP:rs11558819.">
    <original>V</original>
    <variation>I</variation>
    <location>
        <position position="128"/>
    </location>
</feature>
<feature type="sequence variant" id="VAR_089699" description="In IMD119; uncertain significance; loss of expression at the cell membrane; retained within the endoplasmic reticulum/Golgi apparatus; loss of T-cell costimulation; in endothelial cells, may also affect neutrophil transmigration capacity; dbSNP:rs778848090." evidence="10">
    <original>N</original>
    <variation>K</variation>
    <location>
        <position position="219"/>
    </location>
</feature>
<feature type="strand" evidence="19">
    <location>
        <begin position="20"/>
        <end position="28"/>
    </location>
</feature>
<feature type="strand" evidence="19">
    <location>
        <begin position="33"/>
        <end position="35"/>
    </location>
</feature>
<feature type="turn" evidence="19">
    <location>
        <begin position="47"/>
        <end position="49"/>
    </location>
</feature>
<feature type="strand" evidence="19">
    <location>
        <begin position="50"/>
        <end position="59"/>
    </location>
</feature>
<feature type="strand" evidence="19">
    <location>
        <begin position="62"/>
        <end position="66"/>
    </location>
</feature>
<feature type="turn" evidence="19">
    <location>
        <begin position="78"/>
        <end position="83"/>
    </location>
</feature>
<feature type="strand" evidence="18">
    <location>
        <begin position="84"/>
        <end position="86"/>
    </location>
</feature>
<feature type="helix" evidence="19">
    <location>
        <begin position="88"/>
        <end position="92"/>
    </location>
</feature>
<feature type="strand" evidence="19">
    <location>
        <begin position="98"/>
        <end position="102"/>
    </location>
</feature>
<feature type="helix" evidence="19">
    <location>
        <begin position="105"/>
        <end position="107"/>
    </location>
</feature>
<feature type="strand" evidence="19">
    <location>
        <begin position="109"/>
        <end position="117"/>
    </location>
</feature>
<feature type="turn" evidence="19">
    <location>
        <begin position="118"/>
        <end position="121"/>
    </location>
</feature>
<feature type="strand" evidence="19">
    <location>
        <begin position="122"/>
        <end position="136"/>
    </location>
</feature>
<feature type="strand" evidence="19">
    <location>
        <begin position="142"/>
        <end position="144"/>
    </location>
</feature>
<feature type="strand" evidence="19">
    <location>
        <begin position="155"/>
        <end position="165"/>
    </location>
</feature>
<feature type="strand" evidence="19">
    <location>
        <begin position="168"/>
        <end position="173"/>
    </location>
</feature>
<feature type="turn" evidence="19">
    <location>
        <begin position="174"/>
        <end position="177"/>
    </location>
</feature>
<feature type="helix" evidence="19">
    <location>
        <begin position="182"/>
        <end position="184"/>
    </location>
</feature>
<feature type="strand" evidence="19">
    <location>
        <begin position="185"/>
        <end position="191"/>
    </location>
</feature>
<feature type="helix" evidence="19">
    <location>
        <begin position="193"/>
        <end position="195"/>
    </location>
</feature>
<feature type="strand" evidence="19">
    <location>
        <begin position="197"/>
        <end position="204"/>
    </location>
</feature>
<feature type="strand" evidence="19">
    <location>
        <begin position="213"/>
        <end position="219"/>
    </location>
</feature>
<feature type="turn" evidence="19">
    <location>
        <begin position="220"/>
        <end position="223"/>
    </location>
</feature>
<feature type="strand" evidence="19">
    <location>
        <begin position="224"/>
        <end position="229"/>
    </location>
</feature>
<keyword id="KW-0002">3D-structure</keyword>
<keyword id="KW-1064">Adaptive immunity</keyword>
<keyword id="KW-0025">Alternative splicing</keyword>
<keyword id="KW-0075">B-cell activation</keyword>
<keyword id="KW-1003">Cell membrane</keyword>
<keyword id="KW-1015">Disulfide bond</keyword>
<keyword id="KW-0325">Glycoprotein</keyword>
<keyword id="KW-0391">Immunity</keyword>
<keyword id="KW-0393">Immunoglobulin domain</keyword>
<keyword id="KW-0472">Membrane</keyword>
<keyword id="KW-1267">Proteomics identification</keyword>
<keyword id="KW-1185">Reference proteome</keyword>
<keyword id="KW-0732">Signal</keyword>
<keyword id="KW-0812">Transmembrane</keyword>
<keyword id="KW-1133">Transmembrane helix</keyword>
<proteinExistence type="evidence at protein level"/>
<sequence length="302" mass="33349">MRLGSPGLLFLLFSSLRADTQEKEVRAMVGSDVELSCACPEGSRFDLNDVYVYWQTSESKTVVTYHIPQNSSLENVDSRYRNRALMSPAGMLRGDFSLRLFNVTPQDEQKFHCLVLSQSLGFQEVLSVEVTLHVAANFSVPVVSAPHSPSQDELTFTCTSINGYPRPNVYWINKTDNSLLDQALQNDTVFLNMRGLYDVVSVLRIARTPSVNIGCCIENVLLQQNLTVGSQTGNDIGERDKITENPVSTGEKNAATWSILAVLCLLVVVAVAIGWVCRDRCLQHSYAGAWAVSPETELTGHV</sequence>
<organism>
    <name type="scientific">Homo sapiens</name>
    <name type="common">Human</name>
    <dbReference type="NCBI Taxonomy" id="9606"/>
    <lineage>
        <taxon>Eukaryota</taxon>
        <taxon>Metazoa</taxon>
        <taxon>Chordata</taxon>
        <taxon>Craniata</taxon>
        <taxon>Vertebrata</taxon>
        <taxon>Euteleostomi</taxon>
        <taxon>Mammalia</taxon>
        <taxon>Eutheria</taxon>
        <taxon>Euarchontoglires</taxon>
        <taxon>Primates</taxon>
        <taxon>Haplorrhini</taxon>
        <taxon>Catarrhini</taxon>
        <taxon>Hominidae</taxon>
        <taxon>Homo</taxon>
    </lineage>
</organism>
<evidence type="ECO:0000250" key="1"/>
<evidence type="ECO:0000255" key="2"/>
<evidence type="ECO:0000255" key="3">
    <source>
        <dbReference type="PROSITE-ProRule" id="PRU00114"/>
    </source>
</evidence>
<evidence type="ECO:0000269" key="4">
    <source>
    </source>
</evidence>
<evidence type="ECO:0000269" key="5">
    <source>
    </source>
</evidence>
<evidence type="ECO:0000269" key="6">
    <source>
    </source>
</evidence>
<evidence type="ECO:0000269" key="7">
    <source>
    </source>
</evidence>
<evidence type="ECO:0000269" key="8">
    <source>
    </source>
</evidence>
<evidence type="ECO:0000269" key="9">
    <source>
    </source>
</evidence>
<evidence type="ECO:0000269" key="10">
    <source>
    </source>
</evidence>
<evidence type="ECO:0000303" key="11">
    <source>
    </source>
</evidence>
<evidence type="ECO:0000303" key="12">
    <source>
    </source>
</evidence>
<evidence type="ECO:0000303" key="13">
    <source>
    </source>
</evidence>
<evidence type="ECO:0000303" key="14">
    <source>
    </source>
</evidence>
<evidence type="ECO:0000303" key="15">
    <source>
    </source>
</evidence>
<evidence type="ECO:0000303" key="16">
    <source ref="4"/>
</evidence>
<evidence type="ECO:0000305" key="17"/>
<evidence type="ECO:0007829" key="18">
    <source>
        <dbReference type="PDB" id="6X4G"/>
    </source>
</evidence>
<evidence type="ECO:0007829" key="19">
    <source>
        <dbReference type="PDB" id="6X4T"/>
    </source>
</evidence>
<accession>O75144</accession>
<accession>A8MUZ1</accession>
<accession>Q9HD18</accession>
<accession>Q9NRQ1</accession>
<protein>
    <recommendedName>
        <fullName>ICOS ligand</fullName>
    </recommendedName>
    <alternativeName>
        <fullName>B7 homolog 2</fullName>
        <shortName evidence="14">B7-H2</shortName>
    </alternativeName>
    <alternativeName>
        <fullName evidence="11">B7-like protein Gl50</fullName>
    </alternativeName>
    <alternativeName>
        <fullName>B7-related protein 1</fullName>
        <shortName evidence="13">B7RP-1</shortName>
    </alternativeName>
    <cdAntigenName>CD275</cdAntigenName>
</protein>
<name>ICOSL_HUMAN</name>
<comment type="function">
    <text evidence="1 5 6 10">Ligand for the T-cell-specific cell surface receptor ICOS. Acts as a costimulatory signal for T-cell proliferation and cytokine secretion (PubMed:11007762, PubMed:11023515, PubMed:30498080). Also induces B-cell proliferation and differentiation into plasma cells. Could play an important role in mediating local tissue responses to inflammatory conditions, as well as in modulating the secondary immune response by co-stimulating memory T-cell function (By similarity). In endothelial cells, required for proper neutrophil transmigration in response to chemoattractants, such as CXCL8/IL8 or N-formyl-methionyl peptides (fMLP) (PubMed:30498080).</text>
</comment>
<comment type="subunit">
    <text evidence="9">Interacts with CTLA4 (in vitro).</text>
</comment>
<comment type="interaction">
    <interactant intactId="EBI-12923856">
        <id>O75144</id>
    </interactant>
    <interactant intactId="EBI-3922712">
        <id>Q9Y6W8</id>
        <label>ICOS</label>
    </interactant>
    <organismsDiffer>false</organismsDiffer>
    <experiments>8</experiments>
</comment>
<comment type="interaction">
    <interactant intactId="EBI-12923856">
        <id>O75144</id>
    </interactant>
    <interactant intactId="EBI-12923856">
        <id>O75144</id>
        <label>ICOSLG</label>
    </interactant>
    <organismsDiffer>false</organismsDiffer>
    <experiments>7</experiments>
</comment>
<comment type="subcellular location">
    <subcellularLocation>
        <location evidence="5 10">Cell membrane</location>
        <topology evidence="2">Single-pass type I membrane protein</topology>
    </subcellularLocation>
</comment>
<comment type="subcellular location">
    <molecule>Isoform 2</molecule>
    <subcellularLocation>
        <location evidence="7">Cell membrane</location>
    </subcellularLocation>
</comment>
<comment type="alternative products">
    <event type="alternative splicing"/>
    <isoform>
        <id>O75144-1</id>
        <name>1</name>
        <sequence type="displayed"/>
    </isoform>
    <isoform>
        <id>O75144-2</id>
        <name>2</name>
        <sequence type="described" ref="VSP_002520"/>
    </isoform>
    <isoform>
        <id>O75144-3</id>
        <name>3</name>
        <sequence type="described" ref="VSP_054718"/>
    </isoform>
</comment>
<comment type="tissue specificity">
    <text evidence="4 5 6">Expressed on peripheral blood B-cells and monocytes, as well as on monocyte-derived dendritic cells (at protein level).</text>
</comment>
<comment type="tissue specificity">
    <molecule>Isoform 1</molecule>
    <text evidence="7">Widely expressed (brain, heart, kidney, liver, lung, pancreas, placenta, skeletal muscle, bone marrow, colon, ovary, prostate, testis, lymph nodes, leukocytes, spleen, thymus and tonsil).</text>
</comment>
<comment type="tissue specificity">
    <molecule>Isoform 2</molecule>
    <text evidence="7">Detected only in lymph nodes, leukocytes and spleen. Expressed on activated monocytes and dendritic cells.</text>
</comment>
<comment type="induction">
    <text evidence="4 5">Constitutive expression is up-regulated by treatment with TNF in peripheral blood B-cells and monocytes, while it is decreased in dendritic cells (PubMed:11007762). In monocytes, up-regulated by CCL3/macrophage inflammatory protein 1-alpha and IFNG (PubMed:10779774).</text>
</comment>
<comment type="disease" evidence="10">
    <disease id="DI-06903">
        <name>Immunodeficiency 119</name>
        <acronym>IMD119</acronym>
        <description>An autosomal recessive immunologic disorder characterized by childhood-onset of recurrent respiratory tract infections, susceptibility to chronic DNA-based viral infections, hypogammaglobulinemia, and panlymphopenia.</description>
        <dbReference type="MIM" id="620825"/>
    </disease>
    <text>The disease may be caused by variants affecting the gene represented in this entry.</text>
</comment>
<comment type="similarity">
    <text evidence="17">Belongs to the immunoglobulin superfamily. BTN/MOG family.</text>
</comment>
<comment type="sequence caution" evidence="17">
    <conflict type="erroneous initiation">
        <sequence resource="EMBL-CDS" id="BAA31628"/>
    </conflict>
    <text>Extended N-terminus.</text>
</comment>
<comment type="sequence caution" evidence="17">
    <conflict type="miscellaneous discrepancy">
        <sequence resource="EMBL-CDS" id="BAA31628"/>
    </conflict>
    <text>The sequence differs from that shown in position 300 onward for unknown reason.</text>
</comment>
<gene>
    <name type="primary">ICOSLG</name>
    <name type="synonym">B7H2</name>
    <name type="synonym">B7RP1</name>
    <name evidence="12" type="synonym">ICOSL</name>
    <name type="synonym">KIAA0653</name>
</gene>
<dbReference type="EMBL" id="AF199028">
    <property type="protein sequence ID" value="AAF34739.1"/>
    <property type="molecule type" value="mRNA"/>
</dbReference>
<dbReference type="EMBL" id="AF289028">
    <property type="protein sequence ID" value="AAG01176.1"/>
    <property type="molecule type" value="mRNA"/>
</dbReference>
<dbReference type="EMBL" id="AF216749">
    <property type="protein sequence ID" value="AAK16241.1"/>
    <property type="molecule type" value="mRNA"/>
</dbReference>
<dbReference type="EMBL" id="AX100595">
    <property type="protein sequence ID" value="CAC36465.1"/>
    <property type="molecule type" value="mRNA"/>
</dbReference>
<dbReference type="EMBL" id="AB014553">
    <property type="protein sequence ID" value="BAA31628.1"/>
    <property type="status" value="ALT_SEQ"/>
    <property type="molecule type" value="mRNA"/>
</dbReference>
<dbReference type="EMBL" id="AK090492">
    <property type="protein sequence ID" value="BAG52170.1"/>
    <property type="molecule type" value="mRNA"/>
</dbReference>
<dbReference type="EMBL" id="AP001058">
    <property type="status" value="NOT_ANNOTATED_CDS"/>
    <property type="molecule type" value="Genomic_DNA"/>
</dbReference>
<dbReference type="EMBL" id="AP001059">
    <property type="status" value="NOT_ANNOTATED_CDS"/>
    <property type="molecule type" value="Genomic_DNA"/>
</dbReference>
<dbReference type="EMBL" id="CH471079">
    <property type="protein sequence ID" value="EAX09446.1"/>
    <property type="molecule type" value="Genomic_DNA"/>
</dbReference>
<dbReference type="EMBL" id="BC064637">
    <property type="protein sequence ID" value="AAH64637.1"/>
    <property type="molecule type" value="mRNA"/>
</dbReference>
<dbReference type="CCDS" id="CCDS42952.1">
    <molecule id="O75144-1"/>
</dbReference>
<dbReference type="CCDS" id="CCDS63377.1">
    <molecule id="O75144-3"/>
</dbReference>
<dbReference type="CCDS" id="CCDS63379.1">
    <molecule id="O75144-2"/>
</dbReference>
<dbReference type="RefSeq" id="NP_001269979.1">
    <molecule id="O75144-2"/>
    <property type="nucleotide sequence ID" value="NM_001283050.2"/>
</dbReference>
<dbReference type="RefSeq" id="NP_001269980.1">
    <molecule id="O75144-3"/>
    <property type="nucleotide sequence ID" value="NM_001283051.2"/>
</dbReference>
<dbReference type="RefSeq" id="NP_056074.1">
    <molecule id="O75144-1"/>
    <property type="nucleotide sequence ID" value="NM_015259.6"/>
</dbReference>
<dbReference type="RefSeq" id="XP_006723963.1">
    <property type="nucleotide sequence ID" value="XM_006723900.2"/>
</dbReference>
<dbReference type="PDB" id="6X4G">
    <property type="method" value="X-ray"/>
    <property type="resolution" value="3.50 A"/>
    <property type="chains" value="C=19-248"/>
</dbReference>
<dbReference type="PDB" id="6X4T">
    <property type="method" value="X-ray"/>
    <property type="resolution" value="3.15 A"/>
    <property type="chains" value="A/C=19-248"/>
</dbReference>
<dbReference type="PDBsum" id="6X4G"/>
<dbReference type="PDBsum" id="6X4T"/>
<dbReference type="SMR" id="O75144"/>
<dbReference type="BioGRID" id="116900">
    <property type="interactions" value="21"/>
</dbReference>
<dbReference type="FunCoup" id="O75144">
    <property type="interactions" value="492"/>
</dbReference>
<dbReference type="IntAct" id="O75144">
    <property type="interactions" value="18"/>
</dbReference>
<dbReference type="STRING" id="9606.ENSP00000485129"/>
<dbReference type="ChEMBL" id="CHEMBL3712949"/>
<dbReference type="GlyConnect" id="740">
    <property type="glycosylation" value="5 N-Linked glycans (3 sites)"/>
</dbReference>
<dbReference type="GlyCosmos" id="O75144">
    <property type="glycosylation" value="6 sites, 7 glycans"/>
</dbReference>
<dbReference type="GlyGen" id="O75144">
    <property type="glycosylation" value="9 sites, 10 N-linked glycans (4 sites), 1 O-linked glycan (3 sites)"/>
</dbReference>
<dbReference type="iPTMnet" id="O75144"/>
<dbReference type="PhosphoSitePlus" id="O75144"/>
<dbReference type="SwissPalm" id="O75144"/>
<dbReference type="BioMuta" id="ICOSLG"/>
<dbReference type="CPTAC" id="CPTAC-2600"/>
<dbReference type="CPTAC" id="CPTAC-5937"/>
<dbReference type="jPOST" id="O75144"/>
<dbReference type="MassIVE" id="O75144"/>
<dbReference type="PaxDb" id="9606-ENSP00000339477"/>
<dbReference type="PeptideAtlas" id="O75144"/>
<dbReference type="ProteomicsDB" id="2140"/>
<dbReference type="ProteomicsDB" id="49806">
    <molecule id="O75144-1"/>
</dbReference>
<dbReference type="ProteomicsDB" id="49807">
    <molecule id="O75144-2"/>
</dbReference>
<dbReference type="TopDownProteomics" id="O75144-2">
    <molecule id="O75144-2"/>
</dbReference>
<dbReference type="ABCD" id="O75144">
    <property type="antibodies" value="8 sequenced antibodies"/>
</dbReference>
<dbReference type="Antibodypedia" id="24158">
    <property type="antibodies" value="898 antibodies from 47 providers"/>
</dbReference>
<dbReference type="CPTC" id="O75144">
    <property type="antibodies" value="1 antibody"/>
</dbReference>
<dbReference type="DNASU" id="23308"/>
<dbReference type="Ensembl" id="ENST00000344330.9">
    <molecule id="O75144-2"/>
    <property type="protein sequence ID" value="ENSP00000339477.4"/>
    <property type="gene ID" value="ENSG00000160223.18"/>
</dbReference>
<dbReference type="Ensembl" id="ENST00000400377.4">
    <molecule id="O75144-3"/>
    <property type="protein sequence ID" value="ENSP00000383228.3"/>
    <property type="gene ID" value="ENSG00000160223.18"/>
</dbReference>
<dbReference type="Ensembl" id="ENST00000407780.8">
    <molecule id="O75144-1"/>
    <property type="protein sequence ID" value="ENSP00000384432.3"/>
    <property type="gene ID" value="ENSG00000160223.18"/>
</dbReference>
<dbReference type="GeneID" id="23308"/>
<dbReference type="KEGG" id="hsa:23308"/>
<dbReference type="MANE-Select" id="ENST00000407780.8">
    <property type="protein sequence ID" value="ENSP00000384432.3"/>
    <property type="RefSeq nucleotide sequence ID" value="NM_015259.6"/>
    <property type="RefSeq protein sequence ID" value="NP_056074.1"/>
</dbReference>
<dbReference type="UCSC" id="uc002zee.5">
    <molecule id="O75144-1"/>
    <property type="organism name" value="human"/>
</dbReference>
<dbReference type="AGR" id="HGNC:17087"/>
<dbReference type="CTD" id="23308"/>
<dbReference type="DisGeNET" id="23308"/>
<dbReference type="GeneCards" id="ICOSLG"/>
<dbReference type="HGNC" id="HGNC:17087">
    <property type="gene designation" value="ICOSLG"/>
</dbReference>
<dbReference type="HPA" id="ENSG00000160223">
    <property type="expression patterns" value="Low tissue specificity"/>
</dbReference>
<dbReference type="MalaCards" id="ICOSLG"/>
<dbReference type="MIM" id="605717">
    <property type="type" value="gene"/>
</dbReference>
<dbReference type="MIM" id="620825">
    <property type="type" value="phenotype"/>
</dbReference>
<dbReference type="neXtProt" id="NX_O75144"/>
<dbReference type="OpenTargets" id="ENSG00000160223"/>
<dbReference type="PharmGKB" id="PA134977297"/>
<dbReference type="VEuPathDB" id="HostDB:ENSG00000160223"/>
<dbReference type="eggNOG" id="ENOG502SQ2A">
    <property type="taxonomic scope" value="Eukaryota"/>
</dbReference>
<dbReference type="GeneTree" id="ENSGT00940000161590"/>
<dbReference type="HOGENOM" id="CLU_013137_8_2_1"/>
<dbReference type="InParanoid" id="O75144"/>
<dbReference type="OMA" id="TEKHEDY"/>
<dbReference type="OrthoDB" id="10055806at2759"/>
<dbReference type="PAN-GO" id="O75144">
    <property type="GO annotations" value="4 GO annotations based on evolutionary models"/>
</dbReference>
<dbReference type="PhylomeDB" id="O75144"/>
<dbReference type="TreeFam" id="TF331083"/>
<dbReference type="PathwayCommons" id="O75144"/>
<dbReference type="Reactome" id="R-HSA-9927354">
    <property type="pathway name" value="Co-stimulation by ICOS"/>
</dbReference>
<dbReference type="SignaLink" id="O75144"/>
<dbReference type="SIGNOR" id="O75144"/>
<dbReference type="BioGRID-ORCS" id="102723996">
    <property type="hits" value="0 hits in 8 CRISPR screens"/>
</dbReference>
<dbReference type="BioGRID-ORCS" id="23308">
    <property type="hits" value="8 hits in 1143 CRISPR screens"/>
</dbReference>
<dbReference type="ChiTaRS" id="ICOSLG">
    <property type="organism name" value="human"/>
</dbReference>
<dbReference type="GeneWiki" id="ICOSLG"/>
<dbReference type="Pharos" id="O75144">
    <property type="development level" value="Tbio"/>
</dbReference>
<dbReference type="PRO" id="PR:O75144"/>
<dbReference type="Proteomes" id="UP000005640">
    <property type="component" value="Chromosome 21"/>
</dbReference>
<dbReference type="RNAct" id="O75144">
    <property type="molecule type" value="protein"/>
</dbReference>
<dbReference type="Bgee" id="ENSG00000160223">
    <property type="expression patterns" value="Expressed in cartilage tissue and 107 other cell types or tissues"/>
</dbReference>
<dbReference type="ExpressionAtlas" id="O75144">
    <property type="expression patterns" value="baseline and differential"/>
</dbReference>
<dbReference type="GO" id="GO:0009897">
    <property type="term" value="C:external side of plasma membrane"/>
    <property type="evidence" value="ECO:0000318"/>
    <property type="project" value="GO_Central"/>
</dbReference>
<dbReference type="GO" id="GO:0070062">
    <property type="term" value="C:extracellular exosome"/>
    <property type="evidence" value="ECO:0007005"/>
    <property type="project" value="UniProtKB"/>
</dbReference>
<dbReference type="GO" id="GO:0043231">
    <property type="term" value="C:intracellular membrane-bounded organelle"/>
    <property type="evidence" value="ECO:0000314"/>
    <property type="project" value="HPA"/>
</dbReference>
<dbReference type="GO" id="GO:0016020">
    <property type="term" value="C:membrane"/>
    <property type="evidence" value="ECO:0000303"/>
    <property type="project" value="UniProtKB"/>
</dbReference>
<dbReference type="GO" id="GO:0005886">
    <property type="term" value="C:plasma membrane"/>
    <property type="evidence" value="ECO:0000314"/>
    <property type="project" value="HPA"/>
</dbReference>
<dbReference type="GO" id="GO:0042802">
    <property type="term" value="F:identical protein binding"/>
    <property type="evidence" value="ECO:0000353"/>
    <property type="project" value="IntAct"/>
</dbReference>
<dbReference type="GO" id="GO:0048018">
    <property type="term" value="F:receptor ligand activity"/>
    <property type="evidence" value="ECO:0000314"/>
    <property type="project" value="UniProt"/>
</dbReference>
<dbReference type="GO" id="GO:0005102">
    <property type="term" value="F:signaling receptor binding"/>
    <property type="evidence" value="ECO:0000318"/>
    <property type="project" value="GO_Central"/>
</dbReference>
<dbReference type="GO" id="GO:0002250">
    <property type="term" value="P:adaptive immune response"/>
    <property type="evidence" value="ECO:0007669"/>
    <property type="project" value="UniProtKB-KW"/>
</dbReference>
<dbReference type="GO" id="GO:0042113">
    <property type="term" value="P:B cell activation"/>
    <property type="evidence" value="ECO:0007669"/>
    <property type="project" value="UniProtKB-KW"/>
</dbReference>
<dbReference type="GO" id="GO:0006952">
    <property type="term" value="P:defense response"/>
    <property type="evidence" value="ECO:0000303"/>
    <property type="project" value="UniProtKB"/>
</dbReference>
<dbReference type="GO" id="GO:0006972">
    <property type="term" value="P:hyperosmotic response"/>
    <property type="evidence" value="ECO:0000303"/>
    <property type="project" value="UniProtKB"/>
</dbReference>
<dbReference type="GO" id="GO:0042104">
    <property type="term" value="P:positive regulation of activated T cell proliferation"/>
    <property type="evidence" value="ECO:0000304"/>
    <property type="project" value="UniProtKB"/>
</dbReference>
<dbReference type="GO" id="GO:0001817">
    <property type="term" value="P:regulation of cytokine production"/>
    <property type="evidence" value="ECO:0000318"/>
    <property type="project" value="GO_Central"/>
</dbReference>
<dbReference type="GO" id="GO:0007165">
    <property type="term" value="P:signal transduction"/>
    <property type="evidence" value="ECO:0000303"/>
    <property type="project" value="UniProtKB"/>
</dbReference>
<dbReference type="GO" id="GO:0042110">
    <property type="term" value="P:T cell activation"/>
    <property type="evidence" value="ECO:0000303"/>
    <property type="project" value="UniProtKB"/>
</dbReference>
<dbReference type="GO" id="GO:0050852">
    <property type="term" value="P:T cell receptor signaling pathway"/>
    <property type="evidence" value="ECO:0000318"/>
    <property type="project" value="GO_Central"/>
</dbReference>
<dbReference type="GO" id="GO:0061470">
    <property type="term" value="P:T follicular helper cell differentiation"/>
    <property type="evidence" value="ECO:0000314"/>
    <property type="project" value="UniProt"/>
</dbReference>
<dbReference type="CDD" id="cd20935">
    <property type="entry name" value="IgV_B7-H2"/>
    <property type="match status" value="1"/>
</dbReference>
<dbReference type="FunFam" id="2.60.40.10:FF:001468">
    <property type="entry name" value="ICOS ligand isoform b"/>
    <property type="match status" value="1"/>
</dbReference>
<dbReference type="FunFam" id="2.60.40.10:FF:000996">
    <property type="entry name" value="ICOS ligand isoform X2"/>
    <property type="match status" value="1"/>
</dbReference>
<dbReference type="Gene3D" id="2.60.40.10">
    <property type="entry name" value="Immunoglobulins"/>
    <property type="match status" value="2"/>
</dbReference>
<dbReference type="InterPro" id="IPR053896">
    <property type="entry name" value="BTN3A2-like_Ig-C"/>
</dbReference>
<dbReference type="InterPro" id="IPR007110">
    <property type="entry name" value="Ig-like_dom"/>
</dbReference>
<dbReference type="InterPro" id="IPR036179">
    <property type="entry name" value="Ig-like_dom_sf"/>
</dbReference>
<dbReference type="InterPro" id="IPR013783">
    <property type="entry name" value="Ig-like_fold"/>
</dbReference>
<dbReference type="InterPro" id="IPR003599">
    <property type="entry name" value="Ig_sub"/>
</dbReference>
<dbReference type="InterPro" id="IPR013106">
    <property type="entry name" value="Ig_V-set"/>
</dbReference>
<dbReference type="InterPro" id="IPR050504">
    <property type="entry name" value="IgSF_BTN/MOG"/>
</dbReference>
<dbReference type="PANTHER" id="PTHR24100">
    <property type="entry name" value="BUTYROPHILIN"/>
    <property type="match status" value="1"/>
</dbReference>
<dbReference type="PANTHER" id="PTHR24100:SF151">
    <property type="entry name" value="ICOS LIGAND"/>
    <property type="match status" value="1"/>
</dbReference>
<dbReference type="Pfam" id="PF22705">
    <property type="entry name" value="C2-set_3"/>
    <property type="match status" value="1"/>
</dbReference>
<dbReference type="Pfam" id="PF07686">
    <property type="entry name" value="V-set"/>
    <property type="match status" value="1"/>
</dbReference>
<dbReference type="SMART" id="SM00409">
    <property type="entry name" value="IG"/>
    <property type="match status" value="1"/>
</dbReference>
<dbReference type="SUPFAM" id="SSF48726">
    <property type="entry name" value="Immunoglobulin"/>
    <property type="match status" value="2"/>
</dbReference>
<dbReference type="PROSITE" id="PS50835">
    <property type="entry name" value="IG_LIKE"/>
    <property type="match status" value="2"/>
</dbReference>